<comment type="function">
    <text evidence="1">Required for the formation of a threonylcarbamoyl group on adenosine at position 37 (t(6)A37) in tRNAs that read codons beginning with adenine. Is involved in the transfer of the threonylcarbamoyl moiety of threonylcarbamoyl-AMP (TC-AMP) to the N6 group of A37, together with TsaE and TsaB. TsaD likely plays a direct catalytic role in this reaction.</text>
</comment>
<comment type="catalytic activity">
    <reaction evidence="1">
        <text>L-threonylcarbamoyladenylate + adenosine(37) in tRNA = N(6)-L-threonylcarbamoyladenosine(37) in tRNA + AMP + H(+)</text>
        <dbReference type="Rhea" id="RHEA:37059"/>
        <dbReference type="Rhea" id="RHEA-COMP:10162"/>
        <dbReference type="Rhea" id="RHEA-COMP:10163"/>
        <dbReference type="ChEBI" id="CHEBI:15378"/>
        <dbReference type="ChEBI" id="CHEBI:73682"/>
        <dbReference type="ChEBI" id="CHEBI:74411"/>
        <dbReference type="ChEBI" id="CHEBI:74418"/>
        <dbReference type="ChEBI" id="CHEBI:456215"/>
        <dbReference type="EC" id="2.3.1.234"/>
    </reaction>
</comment>
<comment type="cofactor">
    <cofactor evidence="1">
        <name>Fe(2+)</name>
        <dbReference type="ChEBI" id="CHEBI:29033"/>
    </cofactor>
    <text evidence="1">Binds 1 Fe(2+) ion per subunit.</text>
</comment>
<comment type="subcellular location">
    <subcellularLocation>
        <location evidence="1">Cytoplasm</location>
    </subcellularLocation>
</comment>
<comment type="similarity">
    <text evidence="1">Belongs to the KAE1 / TsaD family.</text>
</comment>
<dbReference type="EC" id="2.3.1.234" evidence="1"/>
<dbReference type="EMBL" id="AE017220">
    <property type="protein sequence ID" value="AAX67061.1"/>
    <property type="molecule type" value="Genomic_DNA"/>
</dbReference>
<dbReference type="RefSeq" id="WP_001264389.1">
    <property type="nucleotide sequence ID" value="NC_006905.1"/>
</dbReference>
<dbReference type="SMR" id="Q57JQ1"/>
<dbReference type="KEGG" id="sec:SCH_3155"/>
<dbReference type="HOGENOM" id="CLU_023208_0_0_6"/>
<dbReference type="Proteomes" id="UP000000538">
    <property type="component" value="Chromosome"/>
</dbReference>
<dbReference type="GO" id="GO:0005737">
    <property type="term" value="C:cytoplasm"/>
    <property type="evidence" value="ECO:0007669"/>
    <property type="project" value="UniProtKB-SubCell"/>
</dbReference>
<dbReference type="GO" id="GO:0005506">
    <property type="term" value="F:iron ion binding"/>
    <property type="evidence" value="ECO:0007669"/>
    <property type="project" value="UniProtKB-UniRule"/>
</dbReference>
<dbReference type="GO" id="GO:0061711">
    <property type="term" value="F:N(6)-L-threonylcarbamoyladenine synthase activity"/>
    <property type="evidence" value="ECO:0007669"/>
    <property type="project" value="UniProtKB-EC"/>
</dbReference>
<dbReference type="GO" id="GO:0002949">
    <property type="term" value="P:tRNA threonylcarbamoyladenosine modification"/>
    <property type="evidence" value="ECO:0007669"/>
    <property type="project" value="UniProtKB-UniRule"/>
</dbReference>
<dbReference type="CDD" id="cd24097">
    <property type="entry name" value="ASKHA_NBD_TsaD-like"/>
    <property type="match status" value="1"/>
</dbReference>
<dbReference type="FunFam" id="3.30.420.40:FF:000031">
    <property type="entry name" value="tRNA N6-adenosine threonylcarbamoyltransferase"/>
    <property type="match status" value="1"/>
</dbReference>
<dbReference type="Gene3D" id="3.30.420.40">
    <property type="match status" value="2"/>
</dbReference>
<dbReference type="HAMAP" id="MF_01445">
    <property type="entry name" value="TsaD"/>
    <property type="match status" value="1"/>
</dbReference>
<dbReference type="InterPro" id="IPR043129">
    <property type="entry name" value="ATPase_NBD"/>
</dbReference>
<dbReference type="InterPro" id="IPR000905">
    <property type="entry name" value="Gcp-like_dom"/>
</dbReference>
<dbReference type="InterPro" id="IPR017861">
    <property type="entry name" value="KAE1/TsaD"/>
</dbReference>
<dbReference type="InterPro" id="IPR017860">
    <property type="entry name" value="Peptidase_M22_CS"/>
</dbReference>
<dbReference type="InterPro" id="IPR022450">
    <property type="entry name" value="TsaD"/>
</dbReference>
<dbReference type="NCBIfam" id="TIGR00329">
    <property type="entry name" value="gcp_kae1"/>
    <property type="match status" value="1"/>
</dbReference>
<dbReference type="NCBIfam" id="TIGR03723">
    <property type="entry name" value="T6A_TsaD_YgjD"/>
    <property type="match status" value="1"/>
</dbReference>
<dbReference type="PANTHER" id="PTHR11735">
    <property type="entry name" value="TRNA N6-ADENOSINE THREONYLCARBAMOYLTRANSFERASE"/>
    <property type="match status" value="1"/>
</dbReference>
<dbReference type="PANTHER" id="PTHR11735:SF6">
    <property type="entry name" value="TRNA N6-ADENOSINE THREONYLCARBAMOYLTRANSFERASE, MITOCHONDRIAL"/>
    <property type="match status" value="1"/>
</dbReference>
<dbReference type="Pfam" id="PF00814">
    <property type="entry name" value="TsaD"/>
    <property type="match status" value="1"/>
</dbReference>
<dbReference type="PRINTS" id="PR00789">
    <property type="entry name" value="OSIALOPTASE"/>
</dbReference>
<dbReference type="SUPFAM" id="SSF53067">
    <property type="entry name" value="Actin-like ATPase domain"/>
    <property type="match status" value="1"/>
</dbReference>
<dbReference type="PROSITE" id="PS01016">
    <property type="entry name" value="GLYCOPROTEASE"/>
    <property type="match status" value="1"/>
</dbReference>
<keyword id="KW-0012">Acyltransferase</keyword>
<keyword id="KW-0963">Cytoplasm</keyword>
<keyword id="KW-0408">Iron</keyword>
<keyword id="KW-0479">Metal-binding</keyword>
<keyword id="KW-0808">Transferase</keyword>
<keyword id="KW-0819">tRNA processing</keyword>
<proteinExistence type="inferred from homology"/>
<accession>Q57JQ1</accession>
<feature type="chain" id="PRO_1000024448" description="tRNA N6-adenosine threonylcarbamoyltransferase">
    <location>
        <begin position="1"/>
        <end position="337"/>
    </location>
</feature>
<feature type="binding site" evidence="1">
    <location>
        <position position="111"/>
    </location>
    <ligand>
        <name>Fe cation</name>
        <dbReference type="ChEBI" id="CHEBI:24875"/>
    </ligand>
</feature>
<feature type="binding site" evidence="1">
    <location>
        <position position="115"/>
    </location>
    <ligand>
        <name>Fe cation</name>
        <dbReference type="ChEBI" id="CHEBI:24875"/>
    </ligand>
</feature>
<feature type="binding site" evidence="1">
    <location>
        <begin position="134"/>
        <end position="138"/>
    </location>
    <ligand>
        <name>substrate</name>
    </ligand>
</feature>
<feature type="binding site" evidence="1">
    <location>
        <position position="167"/>
    </location>
    <ligand>
        <name>substrate</name>
    </ligand>
</feature>
<feature type="binding site" evidence="1">
    <location>
        <position position="180"/>
    </location>
    <ligand>
        <name>substrate</name>
    </ligand>
</feature>
<feature type="binding site" evidence="1">
    <location>
        <position position="272"/>
    </location>
    <ligand>
        <name>substrate</name>
    </ligand>
</feature>
<feature type="binding site" evidence="1">
    <location>
        <position position="300"/>
    </location>
    <ligand>
        <name>Fe cation</name>
        <dbReference type="ChEBI" id="CHEBI:24875"/>
    </ligand>
</feature>
<reference key="1">
    <citation type="journal article" date="2005" name="Nucleic Acids Res.">
        <title>The genome sequence of Salmonella enterica serovar Choleraesuis, a highly invasive and resistant zoonotic pathogen.</title>
        <authorList>
            <person name="Chiu C.-H."/>
            <person name="Tang P."/>
            <person name="Chu C."/>
            <person name="Hu S."/>
            <person name="Bao Q."/>
            <person name="Yu J."/>
            <person name="Chou Y.-Y."/>
            <person name="Wang H.-S."/>
            <person name="Lee Y.-S."/>
        </authorList>
    </citation>
    <scope>NUCLEOTIDE SEQUENCE [LARGE SCALE GENOMIC DNA]</scope>
    <source>
        <strain>SC-B67</strain>
    </source>
</reference>
<name>TSAD_SALCH</name>
<protein>
    <recommendedName>
        <fullName evidence="1">tRNA N6-adenosine threonylcarbamoyltransferase</fullName>
        <ecNumber evidence="1">2.3.1.234</ecNumber>
    </recommendedName>
    <alternativeName>
        <fullName evidence="1">N6-L-threonylcarbamoyladenine synthase</fullName>
        <shortName evidence="1">t(6)A synthase</shortName>
    </alternativeName>
    <alternativeName>
        <fullName evidence="1">t(6)A37 threonylcarbamoyladenosine biosynthesis protein TsaD</fullName>
    </alternativeName>
    <alternativeName>
        <fullName evidence="1">tRNA threonylcarbamoyladenosine biosynthesis protein TsaD</fullName>
    </alternativeName>
</protein>
<gene>
    <name evidence="1" type="primary">tsaD</name>
    <name type="synonym">gcp</name>
    <name type="ordered locus">SCH_3155</name>
</gene>
<evidence type="ECO:0000255" key="1">
    <source>
        <dbReference type="HAMAP-Rule" id="MF_01445"/>
    </source>
</evidence>
<organism>
    <name type="scientific">Salmonella choleraesuis (strain SC-B67)</name>
    <dbReference type="NCBI Taxonomy" id="321314"/>
    <lineage>
        <taxon>Bacteria</taxon>
        <taxon>Pseudomonadati</taxon>
        <taxon>Pseudomonadota</taxon>
        <taxon>Gammaproteobacteria</taxon>
        <taxon>Enterobacterales</taxon>
        <taxon>Enterobacteriaceae</taxon>
        <taxon>Salmonella</taxon>
    </lineage>
</organism>
<sequence>MRVLGIETSCDETGIAIYDDKKGLLANQLYSQVKLHADYGGVVPELASRDHVRKTVPLIQAALKEAGLTASDIDAVAYTAGPGLVGALLVGATVGRSLAFAWNVPAIPVHHMEGHLLAPMLEDNPPDFPFVALLVSGGHTQLISVTGIGQYELLGESIDDAAGEAFDKTAKLLGLDYPGGPMLSKMASQGTAGRFVFPRPMTDRPGLDFSFSGLKTFAANTIRSNGDDEQTRADIARAFEDAVVDTLMIKCKRALESTGFKRLVMAGGVSANRTLRAKLAEMMQKRRGEVFYARPEFCTDNGAMIAYAGMVRFKAGVTADLGVTVRPRWPLAELPAA</sequence>